<protein>
    <recommendedName>
        <fullName evidence="6">Cilia- and flagella-associated protein 69</fullName>
    </recommendedName>
</protein>
<name>CFA69_MOUSE</name>
<dbReference type="EMBL" id="AK029545">
    <property type="protein sequence ID" value="BAC26507.1"/>
    <property type="molecule type" value="mRNA"/>
</dbReference>
<dbReference type="EMBL" id="AK039313">
    <property type="protein sequence ID" value="BAC30315.1"/>
    <property type="molecule type" value="mRNA"/>
</dbReference>
<dbReference type="EMBL" id="AK039388">
    <property type="protein sequence ID" value="BAC30334.1"/>
    <property type="molecule type" value="mRNA"/>
</dbReference>
<dbReference type="EMBL" id="AK076835">
    <property type="protein sequence ID" value="BAC36499.1"/>
    <property type="molecule type" value="mRNA"/>
</dbReference>
<dbReference type="EMBL" id="AK164190">
    <property type="protein sequence ID" value="BAE37672.1"/>
    <property type="molecule type" value="mRNA"/>
</dbReference>
<dbReference type="EMBL" id="BC062906">
    <property type="protein sequence ID" value="AAH62906.1"/>
    <property type="molecule type" value="mRNA"/>
</dbReference>
<dbReference type="CCDS" id="CCDS19075.1">
    <molecule id="Q8BH53-1"/>
</dbReference>
<dbReference type="RefSeq" id="NP_766035.1">
    <molecule id="Q8BH53-1"/>
    <property type="nucleotide sequence ID" value="NM_172447.2"/>
</dbReference>
<dbReference type="RefSeq" id="XP_011238969.1">
    <property type="nucleotide sequence ID" value="XM_011240667.2"/>
</dbReference>
<dbReference type="SMR" id="Q8BH53"/>
<dbReference type="BioGRID" id="228914">
    <property type="interactions" value="1"/>
</dbReference>
<dbReference type="FunCoup" id="Q8BH53">
    <property type="interactions" value="257"/>
</dbReference>
<dbReference type="STRING" id="10090.ENSMUSP00000053206"/>
<dbReference type="PhosphoSitePlus" id="Q8BH53"/>
<dbReference type="PaxDb" id="10090-ENSMUSP00000053206"/>
<dbReference type="ProteomicsDB" id="281541">
    <molecule id="Q8BH53-1"/>
</dbReference>
<dbReference type="ProteomicsDB" id="281542">
    <molecule id="Q8BH53-2"/>
</dbReference>
<dbReference type="ProteomicsDB" id="281543">
    <molecule id="Q8BH53-3"/>
</dbReference>
<dbReference type="ProteomicsDB" id="281544">
    <molecule id="Q8BH53-4"/>
</dbReference>
<dbReference type="Antibodypedia" id="67513">
    <property type="antibodies" value="62 antibodies from 16 providers"/>
</dbReference>
<dbReference type="DNASU" id="207686"/>
<dbReference type="Ensembl" id="ENSMUST00000054865.13">
    <molecule id="Q8BH53-1"/>
    <property type="protein sequence ID" value="ENSMUSP00000053206.7"/>
    <property type="gene ID" value="ENSMUSG00000040473.16"/>
</dbReference>
<dbReference type="Ensembl" id="ENSMUST00000135252.3">
    <molecule id="Q8BH53-4"/>
    <property type="protein sequence ID" value="ENSMUSP00000117518.3"/>
    <property type="gene ID" value="ENSMUSG00000040473.16"/>
</dbReference>
<dbReference type="GeneID" id="207686"/>
<dbReference type="KEGG" id="mmu:207686"/>
<dbReference type="UCSC" id="uc008wiu.1">
    <molecule id="Q8BH53-1"/>
    <property type="organism name" value="mouse"/>
</dbReference>
<dbReference type="UCSC" id="uc008wiv.1">
    <molecule id="Q8BH53-4"/>
    <property type="organism name" value="mouse"/>
</dbReference>
<dbReference type="AGR" id="MGI:2443778"/>
<dbReference type="CTD" id="79846"/>
<dbReference type="MGI" id="MGI:2443778">
    <property type="gene designation" value="Cfap69"/>
</dbReference>
<dbReference type="VEuPathDB" id="HostDB:ENSMUSG00000040473"/>
<dbReference type="eggNOG" id="ENOG502QV2V">
    <property type="taxonomic scope" value="Eukaryota"/>
</dbReference>
<dbReference type="GeneTree" id="ENSGT00390000014274"/>
<dbReference type="HOGENOM" id="CLU_322533_0_0_1"/>
<dbReference type="InParanoid" id="Q8BH53"/>
<dbReference type="OMA" id="TINSDLC"/>
<dbReference type="OrthoDB" id="191673at2759"/>
<dbReference type="PhylomeDB" id="Q8BH53"/>
<dbReference type="TreeFam" id="TF328355"/>
<dbReference type="BioGRID-ORCS" id="207686">
    <property type="hits" value="4 hits in 78 CRISPR screens"/>
</dbReference>
<dbReference type="ChiTaRS" id="Cfap69">
    <property type="organism name" value="mouse"/>
</dbReference>
<dbReference type="PRO" id="PR:Q8BH53"/>
<dbReference type="Proteomes" id="UP000000589">
    <property type="component" value="Chromosome 5"/>
</dbReference>
<dbReference type="RNAct" id="Q8BH53">
    <property type="molecule type" value="protein"/>
</dbReference>
<dbReference type="Bgee" id="ENSMUSG00000040473">
    <property type="expression patterns" value="Expressed in spermatid and 185 other cell types or tissues"/>
</dbReference>
<dbReference type="ExpressionAtlas" id="Q8BH53">
    <property type="expression patterns" value="baseline and differential"/>
</dbReference>
<dbReference type="GO" id="GO:1990718">
    <property type="term" value="C:axonemal central pair projection"/>
    <property type="evidence" value="ECO:0000266"/>
    <property type="project" value="MGI"/>
</dbReference>
<dbReference type="GO" id="GO:0005737">
    <property type="term" value="C:cytoplasm"/>
    <property type="evidence" value="ECO:0000250"/>
    <property type="project" value="UniProtKB"/>
</dbReference>
<dbReference type="GO" id="GO:0097730">
    <property type="term" value="C:non-motile cilium"/>
    <property type="evidence" value="ECO:0000315"/>
    <property type="project" value="UniProtKB"/>
</dbReference>
<dbReference type="GO" id="GO:0097225">
    <property type="term" value="C:sperm midpiece"/>
    <property type="evidence" value="ECO:0000250"/>
    <property type="project" value="UniProtKB"/>
</dbReference>
<dbReference type="GO" id="GO:0030317">
    <property type="term" value="P:flagellated sperm motility"/>
    <property type="evidence" value="ECO:0000315"/>
    <property type="project" value="MGI"/>
</dbReference>
<dbReference type="GO" id="GO:0042048">
    <property type="term" value="P:olfactory behavior"/>
    <property type="evidence" value="ECO:0000315"/>
    <property type="project" value="UniProtKB"/>
</dbReference>
<dbReference type="GO" id="GO:1905516">
    <property type="term" value="P:positive regulation of fertilization"/>
    <property type="evidence" value="ECO:0000314"/>
    <property type="project" value="UniProtKB"/>
</dbReference>
<dbReference type="GO" id="GO:1902093">
    <property type="term" value="P:positive regulation of flagellated sperm motility"/>
    <property type="evidence" value="ECO:0000314"/>
    <property type="project" value="UniProtKB"/>
</dbReference>
<dbReference type="GO" id="GO:1990834">
    <property type="term" value="P:response to odorant"/>
    <property type="evidence" value="ECO:0000315"/>
    <property type="project" value="UniProtKB"/>
</dbReference>
<dbReference type="GO" id="GO:0007608">
    <property type="term" value="P:sensory perception of smell"/>
    <property type="evidence" value="ECO:0007669"/>
    <property type="project" value="UniProtKB-KW"/>
</dbReference>
<dbReference type="GO" id="GO:0007288">
    <property type="term" value="P:sperm axoneme assembly"/>
    <property type="evidence" value="ECO:0000315"/>
    <property type="project" value="MGI"/>
</dbReference>
<dbReference type="Gene3D" id="1.25.10.10">
    <property type="entry name" value="Leucine-rich Repeat Variant"/>
    <property type="match status" value="1"/>
</dbReference>
<dbReference type="InterPro" id="IPR011989">
    <property type="entry name" value="ARM-like"/>
</dbReference>
<dbReference type="InterPro" id="IPR016024">
    <property type="entry name" value="ARM-type_fold"/>
</dbReference>
<dbReference type="InterPro" id="IPR048732">
    <property type="entry name" value="CFA69"/>
</dbReference>
<dbReference type="InterPro" id="IPR048733">
    <property type="entry name" value="CFA69_ARM_dom"/>
</dbReference>
<dbReference type="PANTHER" id="PTHR14716">
    <property type="entry name" value="CILIA- AND FLAGELLA-ASSOCIATED PROTEIN 69"/>
    <property type="match status" value="1"/>
</dbReference>
<dbReference type="PANTHER" id="PTHR14716:SF0">
    <property type="entry name" value="CILIA- AND FLAGELLA-ASSOCIATED PROTEIN 69"/>
    <property type="match status" value="1"/>
</dbReference>
<dbReference type="Pfam" id="PF21049">
    <property type="entry name" value="CFA69_ARM_rpt"/>
    <property type="match status" value="1"/>
</dbReference>
<dbReference type="SUPFAM" id="SSF48371">
    <property type="entry name" value="ARM repeat"/>
    <property type="match status" value="1"/>
</dbReference>
<accession>Q8BH53</accession>
<accession>Q3TPR3</accession>
<accession>Q8CA81</accession>
<accession>Q8CDU8</accession>
<sequence>MSTAEASATTADAAEAGGRTKTGSPRTIPVFGVAIPDGEMQGIFKPMDLNRIIKVLEEEDKDVSEEKQLNYIKKLIHCYQNGFPLRDLAQIFKILSLCAEKIEKQPCFVEPASDIIKLCGLPFLKKKVSDEITYTEDTANSFALLGELMKIPSSALRIQICKCIVDFYHAEPLKKHIPGYQQVSSSYKIKMVEVGGLAKAMVQSALLLENQLVEKLWVLKVLQHLSTSGVNCTLMVKAQAASGICAHLNDPDPSGQLLFRSSEVLWNLLEKSSKEEIIQQLSNLECLLALKEVFKNLFVRGHSHYERQLRNDILVITTIIAQNPGAPMIECGFTRDLILFATFNEVKSQNPLVKSLKLFNCYEDFELKKLLFNIIVILCKDLATVQLLIDGKVILALFTYVKKPERLKIMEWSAAQYEELQLHAIATLSSVAPLLIEEYMSCHGNSRILAFLEWCGHEDSYFIHGNSFHGTGGRGNKFAQMRYTLRLLRAMVYLEDETVNKDLCERGVIHQLIEIFKTMMSRPAEKEEAIALEIQSDTLLILSGLCENYIQRKEMFGTEGVDIVLHVMKTDPKNLQRGLGYNVLLFSTLDSIWCCILGCYDSEDYFLEKEGIFLLLDILALNQKKFCNLILGIMVEFCDNPKTSAHVNAWRGKKDLTAASLLIKLWRKEEKELGVKRDRNGKIVDTKRPLFTSFQEEQKTMPLPANCPSIAVMDVAENIRAKIYAVLDKLDFENLPGLSAEDFVTLCIIHRYFDFKIGEIWNEVSEEIKLEKLRLVTTDEKSLNSIIAATENIGKMVASLQSEMIENQALQDVQNEQRVYAKIQATHKQREQANKSWENFLARTSNAKTLKKAKKLQEKAIESSRYTERPQNATFHQTVIKGLNTTVPSGRVVTVQSTPTRLLGGPLADTDIALKKLPIRGGALQRVKVKPPLNDPKKSIPT</sequence>
<gene>
    <name evidence="6" type="primary">Cfap69</name>
</gene>
<proteinExistence type="evidence at protein level"/>
<feature type="chain" id="PRO_0000320597" description="Cilia- and flagella-associated protein 69" evidence="5">
    <location>
        <begin position="1"/>
        <end position="942"/>
    </location>
</feature>
<feature type="region of interest" description="Disordered" evidence="1">
    <location>
        <begin position="1"/>
        <end position="25"/>
    </location>
</feature>
<feature type="compositionally biased region" description="Low complexity" evidence="1">
    <location>
        <begin position="1"/>
        <end position="16"/>
    </location>
</feature>
<feature type="splice variant" id="VSP_031677" description="In isoform 2." evidence="4">
    <location>
        <begin position="1"/>
        <end position="332"/>
    </location>
</feature>
<feature type="splice variant" id="VSP_031678" description="In isoform 3." evidence="4">
    <location>
        <begin position="330"/>
        <end position="386"/>
    </location>
</feature>
<feature type="splice variant" id="VSP_031679" description="In isoform 2." evidence="4">
    <original>FTRDLILFATFNE</original>
    <variation>MIMFYCLLLPAVP</variation>
    <location>
        <begin position="333"/>
        <end position="345"/>
    </location>
</feature>
<feature type="splice variant" id="VSP_031680" description="In isoform 3." evidence="4">
    <original>ILALNQKKFCNLILGIMVEFCDNPKTSAHVNAWRGK</original>
    <variation>KLA</variation>
    <location>
        <begin position="618"/>
        <end position="653"/>
    </location>
</feature>
<feature type="splice variant" id="VSP_031681" description="In isoform 4." evidence="4">
    <original>LNQKKFC</original>
    <variation>VSNIHLL</variation>
    <location>
        <begin position="621"/>
        <end position="627"/>
    </location>
</feature>
<feature type="splice variant" id="VSP_031682" description="In isoform 4." evidence="4">
    <location>
        <begin position="628"/>
        <end position="942"/>
    </location>
</feature>
<feature type="sequence conflict" description="In Ref. 1; BAC26507." evidence="5" ref="1">
    <original>G</original>
    <variation>R</variation>
    <location>
        <position position="611"/>
    </location>
</feature>
<reference key="1">
    <citation type="journal article" date="2005" name="Science">
        <title>The transcriptional landscape of the mammalian genome.</title>
        <authorList>
            <person name="Carninci P."/>
            <person name="Kasukawa T."/>
            <person name="Katayama S."/>
            <person name="Gough J."/>
            <person name="Frith M.C."/>
            <person name="Maeda N."/>
            <person name="Oyama R."/>
            <person name="Ravasi T."/>
            <person name="Lenhard B."/>
            <person name="Wells C."/>
            <person name="Kodzius R."/>
            <person name="Shimokawa K."/>
            <person name="Bajic V.B."/>
            <person name="Brenner S.E."/>
            <person name="Batalov S."/>
            <person name="Forrest A.R."/>
            <person name="Zavolan M."/>
            <person name="Davis M.J."/>
            <person name="Wilming L.G."/>
            <person name="Aidinis V."/>
            <person name="Allen J.E."/>
            <person name="Ambesi-Impiombato A."/>
            <person name="Apweiler R."/>
            <person name="Aturaliya R.N."/>
            <person name="Bailey T.L."/>
            <person name="Bansal M."/>
            <person name="Baxter L."/>
            <person name="Beisel K.W."/>
            <person name="Bersano T."/>
            <person name="Bono H."/>
            <person name="Chalk A.M."/>
            <person name="Chiu K.P."/>
            <person name="Choudhary V."/>
            <person name="Christoffels A."/>
            <person name="Clutterbuck D.R."/>
            <person name="Crowe M.L."/>
            <person name="Dalla E."/>
            <person name="Dalrymple B.P."/>
            <person name="de Bono B."/>
            <person name="Della Gatta G."/>
            <person name="di Bernardo D."/>
            <person name="Down T."/>
            <person name="Engstrom P."/>
            <person name="Fagiolini M."/>
            <person name="Faulkner G."/>
            <person name="Fletcher C.F."/>
            <person name="Fukushima T."/>
            <person name="Furuno M."/>
            <person name="Futaki S."/>
            <person name="Gariboldi M."/>
            <person name="Georgii-Hemming P."/>
            <person name="Gingeras T.R."/>
            <person name="Gojobori T."/>
            <person name="Green R.E."/>
            <person name="Gustincich S."/>
            <person name="Harbers M."/>
            <person name="Hayashi Y."/>
            <person name="Hensch T.K."/>
            <person name="Hirokawa N."/>
            <person name="Hill D."/>
            <person name="Huminiecki L."/>
            <person name="Iacono M."/>
            <person name="Ikeo K."/>
            <person name="Iwama A."/>
            <person name="Ishikawa T."/>
            <person name="Jakt M."/>
            <person name="Kanapin A."/>
            <person name="Katoh M."/>
            <person name="Kawasawa Y."/>
            <person name="Kelso J."/>
            <person name="Kitamura H."/>
            <person name="Kitano H."/>
            <person name="Kollias G."/>
            <person name="Krishnan S.P."/>
            <person name="Kruger A."/>
            <person name="Kummerfeld S.K."/>
            <person name="Kurochkin I.V."/>
            <person name="Lareau L.F."/>
            <person name="Lazarevic D."/>
            <person name="Lipovich L."/>
            <person name="Liu J."/>
            <person name="Liuni S."/>
            <person name="McWilliam S."/>
            <person name="Madan Babu M."/>
            <person name="Madera M."/>
            <person name="Marchionni L."/>
            <person name="Matsuda H."/>
            <person name="Matsuzawa S."/>
            <person name="Miki H."/>
            <person name="Mignone F."/>
            <person name="Miyake S."/>
            <person name="Morris K."/>
            <person name="Mottagui-Tabar S."/>
            <person name="Mulder N."/>
            <person name="Nakano N."/>
            <person name="Nakauchi H."/>
            <person name="Ng P."/>
            <person name="Nilsson R."/>
            <person name="Nishiguchi S."/>
            <person name="Nishikawa S."/>
            <person name="Nori F."/>
            <person name="Ohara O."/>
            <person name="Okazaki Y."/>
            <person name="Orlando V."/>
            <person name="Pang K.C."/>
            <person name="Pavan W.J."/>
            <person name="Pavesi G."/>
            <person name="Pesole G."/>
            <person name="Petrovsky N."/>
            <person name="Piazza S."/>
            <person name="Reed J."/>
            <person name="Reid J.F."/>
            <person name="Ring B.Z."/>
            <person name="Ringwald M."/>
            <person name="Rost B."/>
            <person name="Ruan Y."/>
            <person name="Salzberg S.L."/>
            <person name="Sandelin A."/>
            <person name="Schneider C."/>
            <person name="Schoenbach C."/>
            <person name="Sekiguchi K."/>
            <person name="Semple C.A."/>
            <person name="Seno S."/>
            <person name="Sessa L."/>
            <person name="Sheng Y."/>
            <person name="Shibata Y."/>
            <person name="Shimada H."/>
            <person name="Shimada K."/>
            <person name="Silva D."/>
            <person name="Sinclair B."/>
            <person name="Sperling S."/>
            <person name="Stupka E."/>
            <person name="Sugiura K."/>
            <person name="Sultana R."/>
            <person name="Takenaka Y."/>
            <person name="Taki K."/>
            <person name="Tammoja K."/>
            <person name="Tan S.L."/>
            <person name="Tang S."/>
            <person name="Taylor M.S."/>
            <person name="Tegner J."/>
            <person name="Teichmann S.A."/>
            <person name="Ueda H.R."/>
            <person name="van Nimwegen E."/>
            <person name="Verardo R."/>
            <person name="Wei C.L."/>
            <person name="Yagi K."/>
            <person name="Yamanishi H."/>
            <person name="Zabarovsky E."/>
            <person name="Zhu S."/>
            <person name="Zimmer A."/>
            <person name="Hide W."/>
            <person name="Bult C."/>
            <person name="Grimmond S.M."/>
            <person name="Teasdale R.D."/>
            <person name="Liu E.T."/>
            <person name="Brusic V."/>
            <person name="Quackenbush J."/>
            <person name="Wahlestedt C."/>
            <person name="Mattick J.S."/>
            <person name="Hume D.A."/>
            <person name="Kai C."/>
            <person name="Sasaki D."/>
            <person name="Tomaru Y."/>
            <person name="Fukuda S."/>
            <person name="Kanamori-Katayama M."/>
            <person name="Suzuki M."/>
            <person name="Aoki J."/>
            <person name="Arakawa T."/>
            <person name="Iida J."/>
            <person name="Imamura K."/>
            <person name="Itoh M."/>
            <person name="Kato T."/>
            <person name="Kawaji H."/>
            <person name="Kawagashira N."/>
            <person name="Kawashima T."/>
            <person name="Kojima M."/>
            <person name="Kondo S."/>
            <person name="Konno H."/>
            <person name="Nakano K."/>
            <person name="Ninomiya N."/>
            <person name="Nishio T."/>
            <person name="Okada M."/>
            <person name="Plessy C."/>
            <person name="Shibata K."/>
            <person name="Shiraki T."/>
            <person name="Suzuki S."/>
            <person name="Tagami M."/>
            <person name="Waki K."/>
            <person name="Watahiki A."/>
            <person name="Okamura-Oho Y."/>
            <person name="Suzuki H."/>
            <person name="Kawai J."/>
            <person name="Hayashizaki Y."/>
        </authorList>
    </citation>
    <scope>NUCLEOTIDE SEQUENCE [LARGE SCALE MRNA] (ISOFORMS 1; 2 AND 4)</scope>
    <scope>NUCLEOTIDE SEQUENCE [LARGE SCALE MRNA] OF 1-666 (ISOFORM 3)</scope>
    <source>
        <strain>C57BL/6J</strain>
        <tissue>Hippocampus</tissue>
        <tissue>Spinal cord</tissue>
        <tissue>Testis</tissue>
    </source>
</reference>
<reference key="2">
    <citation type="journal article" date="2004" name="Genome Res.">
        <title>The status, quality, and expansion of the NIH full-length cDNA project: the Mammalian Gene Collection (MGC).</title>
        <authorList>
            <consortium name="The MGC Project Team"/>
        </authorList>
    </citation>
    <scope>NUCLEOTIDE SEQUENCE [LARGE SCALE MRNA] (ISOFORM 1)</scope>
    <source>
        <strain>C57BL/6J</strain>
        <tissue>Brain</tissue>
    </source>
</reference>
<reference key="3">
    <citation type="journal article" date="2017" name="J. Neurosci.">
        <title>Cilia- and Flagella-Associated Protein 69 Regulates Olfactory Transduction Kinetics in Mice.</title>
        <authorList>
            <person name="Talaga A.K."/>
            <person name="Dong F.N."/>
            <person name="Reisert J."/>
            <person name="Zhao H."/>
        </authorList>
    </citation>
    <scope>FUNCTION</scope>
    <scope>SUBCELLULAR LOCATION</scope>
    <scope>TISSUE SPECIFICITY</scope>
</reference>
<reference key="4">
    <citation type="journal article" date="2018" name="Am. J. Hum. Genet.">
        <title>Absence of CFAP69 Causes Male Infertility due to Multiple Morphological Abnormalities of the Flagella in Human and Mouse.</title>
        <authorList>
            <person name="Dong F.N."/>
            <person name="Amiri-Yekta A."/>
            <person name="Martinez G."/>
            <person name="Saut A."/>
            <person name="Tek J."/>
            <person name="Stouvenel L."/>
            <person name="Lores P."/>
            <person name="Karaouzene T."/>
            <person name="Thierry-Mieg N."/>
            <person name="Satre V."/>
            <person name="Brouillet S."/>
            <person name="Daneshipour A."/>
            <person name="Hosseini S.H."/>
            <person name="Bonhivers M."/>
            <person name="Gourabi H."/>
            <person name="Dulioust E."/>
            <person name="Arnoult C."/>
            <person name="Toure A."/>
            <person name="Ray P.F."/>
            <person name="Zhao H."/>
            <person name="Coutton C."/>
        </authorList>
    </citation>
    <scope>FUNCTION</scope>
    <scope>SUBCELLULAR LOCATION</scope>
    <scope>TISSUE SPECIFICITY</scope>
    <scope>DEVELOPMENTAL STAGE</scope>
    <scope>DISRUPTION PHENOTYPE</scope>
</reference>
<organism>
    <name type="scientific">Mus musculus</name>
    <name type="common">Mouse</name>
    <dbReference type="NCBI Taxonomy" id="10090"/>
    <lineage>
        <taxon>Eukaryota</taxon>
        <taxon>Metazoa</taxon>
        <taxon>Chordata</taxon>
        <taxon>Craniata</taxon>
        <taxon>Vertebrata</taxon>
        <taxon>Euteleostomi</taxon>
        <taxon>Mammalia</taxon>
        <taxon>Eutheria</taxon>
        <taxon>Euarchontoglires</taxon>
        <taxon>Glires</taxon>
        <taxon>Rodentia</taxon>
        <taxon>Myomorpha</taxon>
        <taxon>Muroidea</taxon>
        <taxon>Muridae</taxon>
        <taxon>Murinae</taxon>
        <taxon>Mus</taxon>
        <taxon>Mus</taxon>
    </lineage>
</organism>
<evidence type="ECO:0000256" key="1">
    <source>
        <dbReference type="SAM" id="MobiDB-lite"/>
    </source>
</evidence>
<evidence type="ECO:0000269" key="2">
    <source>
    </source>
</evidence>
<evidence type="ECO:0000269" key="3">
    <source>
    </source>
</evidence>
<evidence type="ECO:0000303" key="4">
    <source>
    </source>
</evidence>
<evidence type="ECO:0000305" key="5"/>
<evidence type="ECO:0000312" key="6">
    <source>
        <dbReference type="MGI" id="MGI:2443778"/>
    </source>
</evidence>
<comment type="function">
    <text evidence="2 3">Cilium- and flagellum-associated protein (PubMed:28495971, PubMed:29606301). In the olfactory epithelium, regulates the speed of activation and termination of the odor response and thus contributes to the robustness of olfactory transduction pathways (PubMed:28495971). Required for sperm flagellum assembly and stability (PubMed:29606301).</text>
</comment>
<comment type="subcellular location">
    <subcellularLocation>
        <location evidence="2">Cell projection</location>
        <location evidence="2">Cilium</location>
    </subcellularLocation>
    <subcellularLocation>
        <location evidence="3">Cell projection</location>
        <location evidence="3">Cilium</location>
        <location evidence="3">Flagellum</location>
    </subcellularLocation>
    <text evidence="3">Localizes to the midpiece of the sperm flagellum.</text>
</comment>
<comment type="alternative products">
    <event type="alternative splicing"/>
    <isoform>
        <id>Q8BH53-1</id>
        <name>1</name>
        <sequence type="displayed"/>
    </isoform>
    <isoform>
        <id>Q8BH53-2</id>
        <name>2</name>
        <sequence type="described" ref="VSP_031677 VSP_031679"/>
    </isoform>
    <isoform>
        <id>Q8BH53-3</id>
        <name>3</name>
        <sequence type="described" ref="VSP_031678 VSP_031680"/>
    </isoform>
    <isoform>
        <id>Q8BH53-4</id>
        <name>4</name>
        <sequence type="described" ref="VSP_031681 VSP_031682"/>
    </isoform>
</comment>
<comment type="tissue specificity">
    <text evidence="2 3">Expressed in ciliated olfactory sensory neurons (at protein level) (PubMed:28495971). Expressed in testis, specifically in sperm (at protein level) (PubMed:29606301).</text>
</comment>
<comment type="developmental stage">
    <text evidence="3">Detected in pachytene spermatocytes and has increased expression in early and late spermatids.</text>
</comment>
<comment type="disruption phenotype">
    <text evidence="3">Male mice are infertile due to disrupted sperm flagellum assembly.</text>
</comment>
<keyword id="KW-0025">Alternative splicing</keyword>
<keyword id="KW-0966">Cell projection</keyword>
<keyword id="KW-0969">Cilium</keyword>
<keyword id="KW-0221">Differentiation</keyword>
<keyword id="KW-0282">Flagellum</keyword>
<keyword id="KW-0552">Olfaction</keyword>
<keyword id="KW-1185">Reference proteome</keyword>
<keyword id="KW-0716">Sensory transduction</keyword>
<keyword id="KW-0744">Spermatogenesis</keyword>